<name>THIO_BUCAI</name>
<protein>
    <recommendedName>
        <fullName>Thioredoxin</fullName>
        <shortName>Trx</shortName>
    </recommendedName>
</protein>
<organism>
    <name type="scientific">Buchnera aphidicola subsp. Acyrthosiphon pisum (strain APS)</name>
    <name type="common">Acyrthosiphon pisum symbiotic bacterium</name>
    <dbReference type="NCBI Taxonomy" id="107806"/>
    <lineage>
        <taxon>Bacteria</taxon>
        <taxon>Pseudomonadati</taxon>
        <taxon>Pseudomonadota</taxon>
        <taxon>Gammaproteobacteria</taxon>
        <taxon>Enterobacterales</taxon>
        <taxon>Erwiniaceae</taxon>
        <taxon>Buchnera</taxon>
    </lineage>
</organism>
<sequence length="108" mass="12347">MNKIIELTDQNFEEQVLNSKSFFLVDFWAQWCNPCKILAPILEEISKEYSNKVIVGKLNIEENPNTAPVYSIRSIPTLLLFNNSEVLATKVGAVSKLELKEFLDENIN</sequence>
<gene>
    <name type="primary">trxA</name>
    <name type="ordered locus">BU597</name>
</gene>
<comment type="function">
    <text>Participates in various redox reactions through the reversible oxidation of its active center dithiol to a disulfide and catalyzes dithiol-disulfide exchange reactions.</text>
</comment>
<comment type="similarity">
    <text evidence="2">Belongs to the thioredoxin family.</text>
</comment>
<proteinExistence type="inferred from homology"/>
<reference key="1">
    <citation type="journal article" date="2000" name="Nature">
        <title>Genome sequence of the endocellular bacterial symbiont of aphids Buchnera sp. APS.</title>
        <authorList>
            <person name="Shigenobu S."/>
            <person name="Watanabe H."/>
            <person name="Hattori M."/>
            <person name="Sakaki Y."/>
            <person name="Ishikawa H."/>
        </authorList>
    </citation>
    <scope>NUCLEOTIDE SEQUENCE [LARGE SCALE GENOMIC DNA]</scope>
    <source>
        <strain>APS</strain>
    </source>
</reference>
<accession>P57653</accession>
<evidence type="ECO:0000255" key="1">
    <source>
        <dbReference type="PROSITE-ProRule" id="PRU00691"/>
    </source>
</evidence>
<evidence type="ECO:0000305" key="2"/>
<dbReference type="EMBL" id="BA000003">
    <property type="protein sequence ID" value="BAB13282.1"/>
    <property type="molecule type" value="Genomic_DNA"/>
</dbReference>
<dbReference type="RefSeq" id="NP_240396.1">
    <property type="nucleotide sequence ID" value="NC_002528.1"/>
</dbReference>
<dbReference type="RefSeq" id="WP_009874545.1">
    <property type="nucleotide sequence ID" value="NZ_AP036055.1"/>
</dbReference>
<dbReference type="SMR" id="P57653"/>
<dbReference type="STRING" id="563178.BUAP5A_589"/>
<dbReference type="EnsemblBacteria" id="BAB13282">
    <property type="protein sequence ID" value="BAB13282"/>
    <property type="gene ID" value="BAB13282"/>
</dbReference>
<dbReference type="KEGG" id="buc:BU597"/>
<dbReference type="PATRIC" id="fig|107806.10.peg.600"/>
<dbReference type="eggNOG" id="COG3118">
    <property type="taxonomic scope" value="Bacteria"/>
</dbReference>
<dbReference type="HOGENOM" id="CLU_090389_10_4_6"/>
<dbReference type="Proteomes" id="UP000001806">
    <property type="component" value="Chromosome"/>
</dbReference>
<dbReference type="GO" id="GO:0005829">
    <property type="term" value="C:cytosol"/>
    <property type="evidence" value="ECO:0007669"/>
    <property type="project" value="TreeGrafter"/>
</dbReference>
<dbReference type="GO" id="GO:0015035">
    <property type="term" value="F:protein-disulfide reductase activity"/>
    <property type="evidence" value="ECO:0007669"/>
    <property type="project" value="InterPro"/>
</dbReference>
<dbReference type="GO" id="GO:0045454">
    <property type="term" value="P:cell redox homeostasis"/>
    <property type="evidence" value="ECO:0007669"/>
    <property type="project" value="TreeGrafter"/>
</dbReference>
<dbReference type="CDD" id="cd02947">
    <property type="entry name" value="TRX_family"/>
    <property type="match status" value="1"/>
</dbReference>
<dbReference type="FunFam" id="3.40.30.10:FF:000001">
    <property type="entry name" value="Thioredoxin"/>
    <property type="match status" value="1"/>
</dbReference>
<dbReference type="Gene3D" id="3.40.30.10">
    <property type="entry name" value="Glutaredoxin"/>
    <property type="match status" value="1"/>
</dbReference>
<dbReference type="InterPro" id="IPR005746">
    <property type="entry name" value="Thioredoxin"/>
</dbReference>
<dbReference type="InterPro" id="IPR036249">
    <property type="entry name" value="Thioredoxin-like_sf"/>
</dbReference>
<dbReference type="InterPro" id="IPR013766">
    <property type="entry name" value="Thioredoxin_domain"/>
</dbReference>
<dbReference type="NCBIfam" id="NF006898">
    <property type="entry name" value="PRK09381.1"/>
    <property type="match status" value="1"/>
</dbReference>
<dbReference type="NCBIfam" id="TIGR01068">
    <property type="entry name" value="thioredoxin"/>
    <property type="match status" value="1"/>
</dbReference>
<dbReference type="PANTHER" id="PTHR45663">
    <property type="entry name" value="GEO12009P1"/>
    <property type="match status" value="1"/>
</dbReference>
<dbReference type="PANTHER" id="PTHR45663:SF11">
    <property type="entry name" value="GEO12009P1"/>
    <property type="match status" value="1"/>
</dbReference>
<dbReference type="Pfam" id="PF00085">
    <property type="entry name" value="Thioredoxin"/>
    <property type="match status" value="1"/>
</dbReference>
<dbReference type="PIRSF" id="PIRSF000077">
    <property type="entry name" value="Thioredoxin"/>
    <property type="match status" value="1"/>
</dbReference>
<dbReference type="PRINTS" id="PR00421">
    <property type="entry name" value="THIOREDOXIN"/>
</dbReference>
<dbReference type="SUPFAM" id="SSF52833">
    <property type="entry name" value="Thioredoxin-like"/>
    <property type="match status" value="1"/>
</dbReference>
<dbReference type="PROSITE" id="PS51352">
    <property type="entry name" value="THIOREDOXIN_2"/>
    <property type="match status" value="1"/>
</dbReference>
<feature type="chain" id="PRO_0000120078" description="Thioredoxin">
    <location>
        <begin position="1"/>
        <end position="108"/>
    </location>
</feature>
<feature type="domain" description="Thioredoxin" evidence="1">
    <location>
        <begin position="2"/>
        <end position="108"/>
    </location>
</feature>
<feature type="disulfide bond" description="Redox-active" evidence="1">
    <location>
        <begin position="32"/>
        <end position="35"/>
    </location>
</feature>
<keyword id="KW-1015">Disulfide bond</keyword>
<keyword id="KW-0249">Electron transport</keyword>
<keyword id="KW-0676">Redox-active center</keyword>
<keyword id="KW-1185">Reference proteome</keyword>
<keyword id="KW-0813">Transport</keyword>